<protein>
    <recommendedName>
        <fullName>Cecropin-A</fullName>
    </recommendedName>
</protein>
<accession>Q27239</accession>
<organism>
    <name type="scientific">Bombyx mori</name>
    <name type="common">Silk moth</name>
    <dbReference type="NCBI Taxonomy" id="7091"/>
    <lineage>
        <taxon>Eukaryota</taxon>
        <taxon>Metazoa</taxon>
        <taxon>Ecdysozoa</taxon>
        <taxon>Arthropoda</taxon>
        <taxon>Hexapoda</taxon>
        <taxon>Insecta</taxon>
        <taxon>Pterygota</taxon>
        <taxon>Neoptera</taxon>
        <taxon>Endopterygota</taxon>
        <taxon>Lepidoptera</taxon>
        <taxon>Glossata</taxon>
        <taxon>Ditrysia</taxon>
        <taxon>Bombycoidea</taxon>
        <taxon>Bombycidae</taxon>
        <taxon>Bombycinae</taxon>
        <taxon>Bombyx</taxon>
    </lineage>
</organism>
<proteinExistence type="evidence at transcript level"/>
<reference key="1">
    <citation type="journal article" date="1994" name="Biosci. Biotechnol. Biochem.">
        <title>Cloning of cDNAs for cecropins A and B, and expression of the genes in the silkworm, Bombyx mori.</title>
        <authorList>
            <person name="Yamano Y."/>
            <person name="Matsumoto M."/>
            <person name="Inoue K."/>
            <person name="Kawabata T."/>
            <person name="Morishima I."/>
        </authorList>
    </citation>
    <scope>NUCLEOTIDE SEQUENCE [MRNA]</scope>
    <source>
        <strain>C108</strain>
        <tissue>Larval fat body</tissue>
    </source>
</reference>
<dbReference type="EMBL" id="D17394">
    <property type="protein sequence ID" value="BAA04217.1"/>
    <property type="molecule type" value="mRNA"/>
</dbReference>
<dbReference type="EMBL" id="S74376">
    <property type="protein sequence ID" value="AAC60515.1"/>
    <property type="molecule type" value="mRNA"/>
</dbReference>
<dbReference type="PIR" id="JC2295">
    <property type="entry name" value="CKMTA"/>
</dbReference>
<dbReference type="RefSeq" id="NP_001037030.1">
    <property type="nucleotide sequence ID" value="NM_001043565.1"/>
</dbReference>
<dbReference type="RefSeq" id="NP_001037462.1">
    <property type="nucleotide sequence ID" value="NM_001043997.1"/>
</dbReference>
<dbReference type="RefSeq" id="XP_004933962.1">
    <property type="nucleotide sequence ID" value="XM_004933905.2"/>
</dbReference>
<dbReference type="SMR" id="Q27239"/>
<dbReference type="STRING" id="7091.Q27239"/>
<dbReference type="PaxDb" id="7091-BGIBMGA006280-TA"/>
<dbReference type="EnsemblMetazoa" id="NM_001043565.2">
    <property type="protein sequence ID" value="NP_001037030.2"/>
    <property type="gene ID" value="LOC101743336"/>
</dbReference>
<dbReference type="EnsemblMetazoa" id="NM_001043997.1">
    <property type="protein sequence ID" value="NP_001037462.1"/>
    <property type="gene ID" value="GeneID_693029"/>
</dbReference>
<dbReference type="GeneID" id="693029"/>
<dbReference type="KEGG" id="bmor:101743336"/>
<dbReference type="KEGG" id="bmor:693029"/>
<dbReference type="CTD" id="693029"/>
<dbReference type="eggNOG" id="ENOG502T7RS">
    <property type="taxonomic scope" value="Eukaryota"/>
</dbReference>
<dbReference type="HOGENOM" id="CLU_187909_0_0_1"/>
<dbReference type="InParanoid" id="Q27239"/>
<dbReference type="OMA" id="FACIMAF"/>
<dbReference type="OrthoDB" id="579704at7088"/>
<dbReference type="Proteomes" id="UP000005204">
    <property type="component" value="Unassembled WGS sequence"/>
</dbReference>
<dbReference type="GO" id="GO:0005576">
    <property type="term" value="C:extracellular region"/>
    <property type="evidence" value="ECO:0007669"/>
    <property type="project" value="UniProtKB-SubCell"/>
</dbReference>
<dbReference type="GO" id="GO:0019731">
    <property type="term" value="P:antibacterial humoral response"/>
    <property type="evidence" value="ECO:0007669"/>
    <property type="project" value="InterPro"/>
</dbReference>
<dbReference type="GO" id="GO:0050830">
    <property type="term" value="P:defense response to Gram-positive bacterium"/>
    <property type="evidence" value="ECO:0007669"/>
    <property type="project" value="UniProtKB-ARBA"/>
</dbReference>
<dbReference type="GO" id="GO:0045087">
    <property type="term" value="P:innate immune response"/>
    <property type="evidence" value="ECO:0007669"/>
    <property type="project" value="UniProtKB-KW"/>
</dbReference>
<dbReference type="InterPro" id="IPR000875">
    <property type="entry name" value="Cecropin"/>
</dbReference>
<dbReference type="Pfam" id="PF00272">
    <property type="entry name" value="Cecropin"/>
    <property type="match status" value="1"/>
</dbReference>
<dbReference type="PROSITE" id="PS00268">
    <property type="entry name" value="CECROPIN"/>
    <property type="match status" value="1"/>
</dbReference>
<sequence>MNFVRILSFVFALVLALGAVSAAPEPRWKLFKKIEKVGRNVRDGLIKAGPAIAVIGQAKSLGK</sequence>
<evidence type="ECO:0000250" key="1"/>
<evidence type="ECO:0000255" key="2"/>
<evidence type="ECO:0000269" key="3">
    <source>
    </source>
</evidence>
<evidence type="ECO:0000305" key="4"/>
<keyword id="KW-0027">Amidation</keyword>
<keyword id="KW-0044">Antibiotic</keyword>
<keyword id="KW-0929">Antimicrobial</keyword>
<keyword id="KW-0391">Immunity</keyword>
<keyword id="KW-0399">Innate immunity</keyword>
<keyword id="KW-1185">Reference proteome</keyword>
<keyword id="KW-0964">Secreted</keyword>
<keyword id="KW-0732">Signal</keyword>
<feature type="signal peptide" evidence="2">
    <location>
        <begin position="1"/>
        <end position="22"/>
    </location>
</feature>
<feature type="propeptide" id="PRO_0000004824" evidence="1">
    <location>
        <begin position="23"/>
        <end position="26"/>
    </location>
</feature>
<feature type="chain" id="PRO_0000004825" description="Cecropin-A" evidence="3">
    <location>
        <begin position="27"/>
        <end position="61"/>
    </location>
</feature>
<feature type="modified residue" description="Leucine amide" evidence="1">
    <location>
        <position position="61"/>
    </location>
</feature>
<gene>
    <name type="primary">CECA</name>
</gene>
<comment type="function">
    <text>Cecropins have lytic and antibacterial activity against several Gram-positive and Gram-negative bacteria.</text>
</comment>
<comment type="subcellular location">
    <subcellularLocation>
        <location>Secreted</location>
    </subcellularLocation>
</comment>
<comment type="tissue specificity">
    <text>Highest expression in fat body and hemocytes. Is also expressed in Malpighian tubules and to a much lesser extent in midgut. Not present in silk gland.</text>
</comment>
<comment type="similarity">
    <text evidence="4">Belongs to the cecropin family.</text>
</comment>
<name>CECA_BOMMO</name>